<feature type="chain" id="PRO_0000121317" description="Ras-like GTP-binding protein RYL2">
    <location>
        <begin position="1"/>
        <end position="209"/>
    </location>
</feature>
<feature type="short sequence motif" description="Effector region" evidence="2">
    <location>
        <begin position="34"/>
        <end position="42"/>
    </location>
</feature>
<feature type="binding site" evidence="1">
    <location>
        <begin position="12"/>
        <end position="19"/>
    </location>
    <ligand>
        <name>GTP</name>
        <dbReference type="ChEBI" id="CHEBI:37565"/>
    </ligand>
</feature>
<feature type="binding site" evidence="1">
    <location>
        <begin position="60"/>
        <end position="64"/>
    </location>
    <ligand>
        <name>GTP</name>
        <dbReference type="ChEBI" id="CHEBI:37565"/>
    </ligand>
</feature>
<feature type="binding site" evidence="1">
    <location>
        <begin position="118"/>
        <end position="121"/>
    </location>
    <ligand>
        <name>GTP</name>
        <dbReference type="ChEBI" id="CHEBI:37565"/>
    </ligand>
</feature>
<feature type="lipid moiety-binding region" description="S-geranylgeranyl cysteine" evidence="1">
    <location>
        <position position="208"/>
    </location>
</feature>
<feature type="lipid moiety-binding region" description="S-geranylgeranyl cysteine" evidence="1">
    <location>
        <position position="209"/>
    </location>
</feature>
<feature type="sequence conflict" description="In Ref. 1; AAA35246." evidence="2" ref="1">
    <original>S</original>
    <variation>T</variation>
    <location>
        <position position="79"/>
    </location>
</feature>
<organism>
    <name type="scientific">Yarrowia lipolytica (strain CLIB 122 / E 150)</name>
    <name type="common">Yeast</name>
    <name type="synonym">Candida lipolytica</name>
    <dbReference type="NCBI Taxonomy" id="284591"/>
    <lineage>
        <taxon>Eukaryota</taxon>
        <taxon>Fungi</taxon>
        <taxon>Dikarya</taxon>
        <taxon>Ascomycota</taxon>
        <taxon>Saccharomycotina</taxon>
        <taxon>Dipodascomycetes</taxon>
        <taxon>Dipodascales</taxon>
        <taxon>Dipodascales incertae sedis</taxon>
        <taxon>Yarrowia</taxon>
    </lineage>
</organism>
<comment type="function">
    <text evidence="1">Protein transport. Probably involved in vesicular traffic (By similarity).</text>
</comment>
<comment type="subcellular location">
    <subcellularLocation>
        <location evidence="2">Cell membrane</location>
        <topology evidence="2">Lipid-anchor</topology>
        <orientation evidence="2">Cytoplasmic side</orientation>
    </subcellularLocation>
</comment>
<comment type="similarity">
    <text evidence="2">Belongs to the small GTPase superfamily. Rab family.</text>
</comment>
<evidence type="ECO:0000250" key="1"/>
<evidence type="ECO:0000305" key="2"/>
<sequence>MESMDAKIVLLGAQGVGKTCFVTRYVNNKFQAGQASTIGASFSRKRVVVNDTTVRLQIWDTAGQERFRSMAPIYYRSASCGILCYDVTSRASFDAMHLWLLELKQNLSSDIIIHIVGTKVDLVKDEPSLREVPFEQCVEYASEWLQDDSCCHEISAKDDEGVEEVFEVIITKLLDKREADEQQKHNSQRQRQSVVYLHTDEDEQKSSCC</sequence>
<gene>
    <name type="primary">RYL2</name>
    <name type="ordered locus">YALI0A04367g</name>
</gene>
<keyword id="KW-1003">Cell membrane</keyword>
<keyword id="KW-0342">GTP-binding</keyword>
<keyword id="KW-0449">Lipoprotein</keyword>
<keyword id="KW-0472">Membrane</keyword>
<keyword id="KW-0547">Nucleotide-binding</keyword>
<keyword id="KW-0636">Prenylation</keyword>
<keyword id="KW-0653">Protein transport</keyword>
<keyword id="KW-1185">Reference proteome</keyword>
<keyword id="KW-0813">Transport</keyword>
<accession>P41925</accession>
<accession>Q6CHV9</accession>
<dbReference type="EMBL" id="L06970">
    <property type="protein sequence ID" value="AAA35246.1"/>
    <property type="molecule type" value="Genomic_DNA"/>
</dbReference>
<dbReference type="EMBL" id="CR382127">
    <property type="protein sequence ID" value="CAG83676.1"/>
    <property type="molecule type" value="Genomic_DNA"/>
</dbReference>
<dbReference type="RefSeq" id="XP_499752.1">
    <property type="nucleotide sequence ID" value="XM_499752.1"/>
</dbReference>
<dbReference type="SMR" id="P41925"/>
<dbReference type="STRING" id="284591.P41925"/>
<dbReference type="EnsemblFungi" id="CAG83676">
    <property type="protein sequence ID" value="CAG83676"/>
    <property type="gene ID" value="YALI0_A04367g"/>
</dbReference>
<dbReference type="KEGG" id="yli:2906287"/>
<dbReference type="VEuPathDB" id="FungiDB:YALI0_A04367g"/>
<dbReference type="HOGENOM" id="CLU_041217_10_2_1"/>
<dbReference type="InParanoid" id="P41925"/>
<dbReference type="OMA" id="TCHEISA"/>
<dbReference type="OrthoDB" id="116137at4891"/>
<dbReference type="Proteomes" id="UP000001300">
    <property type="component" value="Chromosome A"/>
</dbReference>
<dbReference type="GO" id="GO:0005769">
    <property type="term" value="C:early endosome"/>
    <property type="evidence" value="ECO:0000318"/>
    <property type="project" value="GO_Central"/>
</dbReference>
<dbReference type="GO" id="GO:0012505">
    <property type="term" value="C:endomembrane system"/>
    <property type="evidence" value="ECO:0000318"/>
    <property type="project" value="GO_Central"/>
</dbReference>
<dbReference type="GO" id="GO:0005886">
    <property type="term" value="C:plasma membrane"/>
    <property type="evidence" value="ECO:0007669"/>
    <property type="project" value="UniProtKB-SubCell"/>
</dbReference>
<dbReference type="GO" id="GO:0005525">
    <property type="term" value="F:GTP binding"/>
    <property type="evidence" value="ECO:0007669"/>
    <property type="project" value="UniProtKB-KW"/>
</dbReference>
<dbReference type="GO" id="GO:0003924">
    <property type="term" value="F:GTPase activity"/>
    <property type="evidence" value="ECO:0000318"/>
    <property type="project" value="GO_Central"/>
</dbReference>
<dbReference type="GO" id="GO:0006886">
    <property type="term" value="P:intracellular protein transport"/>
    <property type="evidence" value="ECO:0000318"/>
    <property type="project" value="GO_Central"/>
</dbReference>
<dbReference type="CDD" id="cd00154">
    <property type="entry name" value="Rab"/>
    <property type="match status" value="1"/>
</dbReference>
<dbReference type="FunFam" id="3.40.50.300:FF:000808">
    <property type="entry name" value="Small GTP-binding protein, putative"/>
    <property type="match status" value="1"/>
</dbReference>
<dbReference type="Gene3D" id="3.40.50.300">
    <property type="entry name" value="P-loop containing nucleotide triphosphate hydrolases"/>
    <property type="match status" value="1"/>
</dbReference>
<dbReference type="InterPro" id="IPR027417">
    <property type="entry name" value="P-loop_NTPase"/>
</dbReference>
<dbReference type="InterPro" id="IPR005225">
    <property type="entry name" value="Small_GTP-bd"/>
</dbReference>
<dbReference type="InterPro" id="IPR001806">
    <property type="entry name" value="Small_GTPase"/>
</dbReference>
<dbReference type="NCBIfam" id="TIGR00231">
    <property type="entry name" value="small_GTP"/>
    <property type="match status" value="1"/>
</dbReference>
<dbReference type="PANTHER" id="PTHR47978">
    <property type="match status" value="1"/>
</dbReference>
<dbReference type="Pfam" id="PF00071">
    <property type="entry name" value="Ras"/>
    <property type="match status" value="1"/>
</dbReference>
<dbReference type="PRINTS" id="PR00449">
    <property type="entry name" value="RASTRNSFRMNG"/>
</dbReference>
<dbReference type="SMART" id="SM00175">
    <property type="entry name" value="RAB"/>
    <property type="match status" value="1"/>
</dbReference>
<dbReference type="SMART" id="SM00176">
    <property type="entry name" value="RAN"/>
    <property type="match status" value="1"/>
</dbReference>
<dbReference type="SMART" id="SM00173">
    <property type="entry name" value="RAS"/>
    <property type="match status" value="1"/>
</dbReference>
<dbReference type="SMART" id="SM00174">
    <property type="entry name" value="RHO"/>
    <property type="match status" value="1"/>
</dbReference>
<dbReference type="SUPFAM" id="SSF52540">
    <property type="entry name" value="P-loop containing nucleoside triphosphate hydrolases"/>
    <property type="match status" value="1"/>
</dbReference>
<dbReference type="PROSITE" id="PS51419">
    <property type="entry name" value="RAB"/>
    <property type="match status" value="1"/>
</dbReference>
<protein>
    <recommendedName>
        <fullName>Ras-like GTP-binding protein RYL2</fullName>
    </recommendedName>
</protein>
<proteinExistence type="inferred from homology"/>
<reference key="1">
    <citation type="submission" date="1992-12" db="EMBL/GenBank/DDBJ databases">
        <title>RYL2 a new member of Ras/Rho/Ypt1-like gene family.</title>
        <authorList>
            <person name="Pertuiset B."/>
            <person name="Beckerich J.-M."/>
            <person name="Gaillardin C."/>
        </authorList>
    </citation>
    <scope>NUCLEOTIDE SEQUENCE [GENOMIC DNA]</scope>
    <source>
        <strain>ATCC 20460 / W29 / CBS 7504 / IFP29</strain>
    </source>
</reference>
<reference key="2">
    <citation type="journal article" date="2004" name="Nature">
        <title>Genome evolution in yeasts.</title>
        <authorList>
            <person name="Dujon B."/>
            <person name="Sherman D."/>
            <person name="Fischer G."/>
            <person name="Durrens P."/>
            <person name="Casaregola S."/>
            <person name="Lafontaine I."/>
            <person name="de Montigny J."/>
            <person name="Marck C."/>
            <person name="Neuveglise C."/>
            <person name="Talla E."/>
            <person name="Goffard N."/>
            <person name="Frangeul L."/>
            <person name="Aigle M."/>
            <person name="Anthouard V."/>
            <person name="Babour A."/>
            <person name="Barbe V."/>
            <person name="Barnay S."/>
            <person name="Blanchin S."/>
            <person name="Beckerich J.-M."/>
            <person name="Beyne E."/>
            <person name="Bleykasten C."/>
            <person name="Boisrame A."/>
            <person name="Boyer J."/>
            <person name="Cattolico L."/>
            <person name="Confanioleri F."/>
            <person name="de Daruvar A."/>
            <person name="Despons L."/>
            <person name="Fabre E."/>
            <person name="Fairhead C."/>
            <person name="Ferry-Dumazet H."/>
            <person name="Groppi A."/>
            <person name="Hantraye F."/>
            <person name="Hennequin C."/>
            <person name="Jauniaux N."/>
            <person name="Joyet P."/>
            <person name="Kachouri R."/>
            <person name="Kerrest A."/>
            <person name="Koszul R."/>
            <person name="Lemaire M."/>
            <person name="Lesur I."/>
            <person name="Ma L."/>
            <person name="Muller H."/>
            <person name="Nicaud J.-M."/>
            <person name="Nikolski M."/>
            <person name="Oztas S."/>
            <person name="Ozier-Kalogeropoulos O."/>
            <person name="Pellenz S."/>
            <person name="Potier S."/>
            <person name="Richard G.-F."/>
            <person name="Straub M.-L."/>
            <person name="Suleau A."/>
            <person name="Swennen D."/>
            <person name="Tekaia F."/>
            <person name="Wesolowski-Louvel M."/>
            <person name="Westhof E."/>
            <person name="Wirth B."/>
            <person name="Zeniou-Meyer M."/>
            <person name="Zivanovic Y."/>
            <person name="Bolotin-Fukuhara M."/>
            <person name="Thierry A."/>
            <person name="Bouchier C."/>
            <person name="Caudron B."/>
            <person name="Scarpelli C."/>
            <person name="Gaillardin C."/>
            <person name="Weissenbach J."/>
            <person name="Wincker P."/>
            <person name="Souciet J.-L."/>
        </authorList>
    </citation>
    <scope>NUCLEOTIDE SEQUENCE [LARGE SCALE GENOMIC DNA]</scope>
    <source>
        <strain>CLIB 122 / E 150</strain>
    </source>
</reference>
<name>RYL2_YARLI</name>